<keyword id="KW-0256">Endoplasmic reticulum</keyword>
<keyword id="KW-0325">Glycoprotein</keyword>
<keyword id="KW-0378">Hydrolase</keyword>
<keyword id="KW-0472">Membrane</keyword>
<keyword id="KW-0645">Protease</keyword>
<keyword id="KW-0735">Signal-anchor</keyword>
<keyword id="KW-0812">Transmembrane</keyword>
<keyword id="KW-1133">Transmembrane helix</keyword>
<name>SEC11_YEASL</name>
<evidence type="ECO:0000250" key="1">
    <source>
        <dbReference type="UniProtKB" id="P15367"/>
    </source>
</evidence>
<evidence type="ECO:0000250" key="2">
    <source>
        <dbReference type="UniProtKB" id="P67812"/>
    </source>
</evidence>
<evidence type="ECO:0000255" key="3"/>
<evidence type="ECO:0000305" key="4"/>
<protein>
    <recommendedName>
        <fullName>Signal peptidase complex catalytic subunit SEC11</fullName>
        <ecNumber evidence="1">3.4.21.89</ecNumber>
    </recommendedName>
    <alternativeName>
        <fullName>Secretory protein 11</fullName>
    </alternativeName>
    <alternativeName>
        <fullName>Signal peptidase I</fullName>
    </alternativeName>
</protein>
<organism>
    <name type="scientific">Saccharomyces cerevisiae (strain Lalvin QA23)</name>
    <name type="common">Baker's yeast</name>
    <dbReference type="NCBI Taxonomy" id="764098"/>
    <lineage>
        <taxon>Eukaryota</taxon>
        <taxon>Fungi</taxon>
        <taxon>Dikarya</taxon>
        <taxon>Ascomycota</taxon>
        <taxon>Saccharomycotina</taxon>
        <taxon>Saccharomycetes</taxon>
        <taxon>Saccharomycetales</taxon>
        <taxon>Saccharomycetaceae</taxon>
        <taxon>Saccharomyces</taxon>
    </lineage>
</organism>
<proteinExistence type="inferred from homology"/>
<gene>
    <name type="primary">SEC11</name>
    <name type="ORF">QA23_2427</name>
</gene>
<reference key="1">
    <citation type="journal article" date="2011" name="PLoS Genet.">
        <title>Whole-genome comparison reveals novel genetic elements that characterize the genome of industrial strains of Saccharomyces cerevisiae.</title>
        <authorList>
            <person name="Borneman A.R."/>
            <person name="Desany B.A."/>
            <person name="Riches D."/>
            <person name="Affourtit J.P."/>
            <person name="Forgan A.H."/>
            <person name="Pretorius I.S."/>
            <person name="Egholm M."/>
            <person name="Chambers P.J."/>
        </authorList>
    </citation>
    <scope>NUCLEOTIDE SEQUENCE [LARGE SCALE GENOMIC DNA]</scope>
    <source>
        <strain>Lalvin QA23</strain>
    </source>
</reference>
<accession>E7KQ01</accession>
<dbReference type="EC" id="3.4.21.89" evidence="1"/>
<dbReference type="EMBL" id="ADVV01000048">
    <property type="protein sequence ID" value="EGA82330.1"/>
    <property type="molecule type" value="Genomic_DNA"/>
</dbReference>
<dbReference type="SMR" id="E7KQ01"/>
<dbReference type="MEROPS" id="S26.010"/>
<dbReference type="GlyCosmos" id="E7KQ01">
    <property type="glycosylation" value="1 site, No reported glycans"/>
</dbReference>
<dbReference type="HOGENOM" id="CLU_089996_0_0_1"/>
<dbReference type="GO" id="GO:0005787">
    <property type="term" value="C:signal peptidase complex"/>
    <property type="evidence" value="ECO:0007669"/>
    <property type="project" value="TreeGrafter"/>
</dbReference>
<dbReference type="GO" id="GO:0004252">
    <property type="term" value="F:serine-type endopeptidase activity"/>
    <property type="evidence" value="ECO:0007669"/>
    <property type="project" value="UniProtKB-EC"/>
</dbReference>
<dbReference type="GO" id="GO:0006465">
    <property type="term" value="P:signal peptide processing"/>
    <property type="evidence" value="ECO:0007669"/>
    <property type="project" value="InterPro"/>
</dbReference>
<dbReference type="CDD" id="cd06462">
    <property type="entry name" value="Peptidase_S24_S26"/>
    <property type="match status" value="1"/>
</dbReference>
<dbReference type="InterPro" id="IPR036286">
    <property type="entry name" value="LexA/Signal_pep-like_sf"/>
</dbReference>
<dbReference type="InterPro" id="IPR019758">
    <property type="entry name" value="Pept_S26A_signal_pept_1_CS"/>
</dbReference>
<dbReference type="InterPro" id="IPR019756">
    <property type="entry name" value="Pept_S26A_signal_pept_1_Ser-AS"/>
</dbReference>
<dbReference type="InterPro" id="IPR015927">
    <property type="entry name" value="Peptidase_S24_S26A/B/C"/>
</dbReference>
<dbReference type="InterPro" id="IPR001733">
    <property type="entry name" value="Peptidase_S26B"/>
</dbReference>
<dbReference type="NCBIfam" id="TIGR02228">
    <property type="entry name" value="sigpep_I_arch"/>
    <property type="match status" value="1"/>
</dbReference>
<dbReference type="PANTHER" id="PTHR10806">
    <property type="entry name" value="SIGNAL PEPTIDASE COMPLEX CATALYTIC SUBUNIT SEC11"/>
    <property type="match status" value="1"/>
</dbReference>
<dbReference type="PANTHER" id="PTHR10806:SF6">
    <property type="entry name" value="SIGNAL PEPTIDASE COMPLEX CATALYTIC SUBUNIT SEC11"/>
    <property type="match status" value="1"/>
</dbReference>
<dbReference type="Pfam" id="PF00717">
    <property type="entry name" value="Peptidase_S24"/>
    <property type="match status" value="1"/>
</dbReference>
<dbReference type="PRINTS" id="PR00728">
    <property type="entry name" value="SIGNALPTASE"/>
</dbReference>
<dbReference type="SUPFAM" id="SSF51306">
    <property type="entry name" value="LexA/Signal peptidase"/>
    <property type="match status" value="1"/>
</dbReference>
<dbReference type="PROSITE" id="PS00501">
    <property type="entry name" value="SPASE_I_1"/>
    <property type="match status" value="1"/>
</dbReference>
<dbReference type="PROSITE" id="PS00761">
    <property type="entry name" value="SPASE_I_3"/>
    <property type="match status" value="1"/>
</dbReference>
<feature type="chain" id="PRO_0000412358" description="Signal peptidase complex catalytic subunit SEC11">
    <location>
        <begin position="1"/>
        <end position="167"/>
    </location>
</feature>
<feature type="topological domain" description="Cytoplasmic" evidence="3">
    <location>
        <begin position="1"/>
        <end position="9"/>
    </location>
</feature>
<feature type="transmembrane region" description="Helical; Signal-anchor for type II membrane protein" evidence="3">
    <location>
        <begin position="10"/>
        <end position="30"/>
    </location>
</feature>
<feature type="topological domain" description="Lumenal" evidence="3">
    <location>
        <begin position="31"/>
        <end position="167"/>
    </location>
</feature>
<feature type="region of interest" description="C-terminal short (CTS) helix" evidence="2">
    <location>
        <begin position="153"/>
        <end position="164"/>
    </location>
</feature>
<feature type="active site" description="Charge relay system" evidence="1">
    <location>
        <position position="44"/>
    </location>
</feature>
<feature type="active site" description="Charge relay system" evidence="1">
    <location>
        <position position="83"/>
    </location>
</feature>
<feature type="active site" description="Charge relay system" evidence="1">
    <location>
        <position position="109"/>
    </location>
</feature>
<feature type="glycosylation site" description="N-linked (GlcNAc...) asparagine" evidence="3">
    <location>
        <position position="121"/>
    </location>
</feature>
<sequence>MNLRFELQKLLNVCFLFASAYMFWQGLAIATNSASPIVVVLSGSMEPAFQRGDILFLWNRNTFNQVGDVVVYEVEGKQIPIVHRVLRQHNNHADKQFLLTKGDNNAGNDISLYANKKIYLNKSKEIVGTVKGYFPQLGYITIWISENKYAKFALLGMLGLSALLGGE</sequence>
<comment type="function">
    <text evidence="1 2">Catalytic component of the signal peptidase complex (SPC) which catalyzes the cleavage of N-terminal signal sequences from nascent proteins as they are translocated into the lumen of the endoplasmic reticulum (By similarity). Specifically cleaves N-terminal signal peptides that contain a hydrophobic alpha-helix (h-region) shorter than 18-20 amino acids (By similarity).</text>
</comment>
<comment type="catalytic activity">
    <reaction evidence="1">
        <text>Cleavage of hydrophobic, N-terminal signal or leader sequences from secreted and periplasmic proteins.</text>
        <dbReference type="EC" id="3.4.21.89"/>
    </reaction>
</comment>
<comment type="subunit">
    <text evidence="1 2">Component of the signal peptidase complex (SPC) composed of a catalytic subunit SEC11 and three accessory subunits SPC1, SPC2 and SPC3 (By similarity). The complex induces a local thinning of the ER membrane which is used to measure the length of the signal peptide (SP) h-region of protein substrates. This ensures the selectivity of the complex towards h-regions shorter than 18-20 amino acids (By similarity). SPC associates with the translocon complex (By similarity).</text>
</comment>
<comment type="subcellular location">
    <subcellularLocation>
        <location evidence="1">Endoplasmic reticulum membrane</location>
        <topology evidence="1">Single-pass type II membrane protein</topology>
    </subcellularLocation>
</comment>
<comment type="domain">
    <text evidence="2">The C-terminal short (CTS) helix is essential for catalytic activity. It may be accommodated as a transmembrane helix in the thinned membrane environment of the complex, similarly to the signal peptide in the complex substrates.</text>
</comment>
<comment type="similarity">
    <text evidence="4">Belongs to the peptidase S26B family.</text>
</comment>